<accession>Q49W80</accession>
<proteinExistence type="inferred from homology"/>
<dbReference type="EC" id="1.6.5.9" evidence="1"/>
<dbReference type="EMBL" id="AP008934">
    <property type="protein sequence ID" value="BAE18979.1"/>
    <property type="molecule type" value="Genomic_DNA"/>
</dbReference>
<dbReference type="RefSeq" id="WP_011303523.1">
    <property type="nucleotide sequence ID" value="NZ_MTGA01000039.1"/>
</dbReference>
<dbReference type="SMR" id="Q49W80"/>
<dbReference type="GeneID" id="3615495"/>
<dbReference type="KEGG" id="ssp:SSP1834"/>
<dbReference type="PATRIC" id="fig|342451.11.peg.1830"/>
<dbReference type="eggNOG" id="COG1252">
    <property type="taxonomic scope" value="Bacteria"/>
</dbReference>
<dbReference type="HOGENOM" id="CLU_021377_7_2_9"/>
<dbReference type="OrthoDB" id="9781621at2"/>
<dbReference type="Proteomes" id="UP000006371">
    <property type="component" value="Chromosome"/>
</dbReference>
<dbReference type="GO" id="GO:0005886">
    <property type="term" value="C:plasma membrane"/>
    <property type="evidence" value="ECO:0007669"/>
    <property type="project" value="UniProtKB-SubCell"/>
</dbReference>
<dbReference type="GO" id="GO:0003955">
    <property type="term" value="F:NAD(P)H dehydrogenase (quinone) activity"/>
    <property type="evidence" value="ECO:0007669"/>
    <property type="project" value="TreeGrafter"/>
</dbReference>
<dbReference type="GO" id="GO:0050136">
    <property type="term" value="F:NADH:ubiquinone reductase (non-electrogenic) activity"/>
    <property type="evidence" value="ECO:0007669"/>
    <property type="project" value="UniProtKB-EC"/>
</dbReference>
<dbReference type="GO" id="GO:0019646">
    <property type="term" value="P:aerobic electron transport chain"/>
    <property type="evidence" value="ECO:0007669"/>
    <property type="project" value="TreeGrafter"/>
</dbReference>
<dbReference type="Gene3D" id="3.50.50.100">
    <property type="match status" value="1"/>
</dbReference>
<dbReference type="InterPro" id="IPR036188">
    <property type="entry name" value="FAD/NAD-bd_sf"/>
</dbReference>
<dbReference type="InterPro" id="IPR023753">
    <property type="entry name" value="FAD/NAD-binding_dom"/>
</dbReference>
<dbReference type="InterPro" id="IPR051169">
    <property type="entry name" value="NADH-Q_oxidoreductase"/>
</dbReference>
<dbReference type="PANTHER" id="PTHR42913:SF3">
    <property type="entry name" value="64 KDA MITOCHONDRIAL NADH DEHYDROGENASE (EUROFUNG)"/>
    <property type="match status" value="1"/>
</dbReference>
<dbReference type="PANTHER" id="PTHR42913">
    <property type="entry name" value="APOPTOSIS-INDUCING FACTOR 1"/>
    <property type="match status" value="1"/>
</dbReference>
<dbReference type="Pfam" id="PF07992">
    <property type="entry name" value="Pyr_redox_2"/>
    <property type="match status" value="1"/>
</dbReference>
<dbReference type="PRINTS" id="PR00368">
    <property type="entry name" value="FADPNR"/>
</dbReference>
<dbReference type="SUPFAM" id="SSF51905">
    <property type="entry name" value="FAD/NAD(P)-binding domain"/>
    <property type="match status" value="2"/>
</dbReference>
<gene>
    <name type="ordered locus">SSP1834</name>
</gene>
<reference key="1">
    <citation type="journal article" date="2005" name="Proc. Natl. Acad. Sci. U.S.A.">
        <title>Whole genome sequence of Staphylococcus saprophyticus reveals the pathogenesis of uncomplicated urinary tract infection.</title>
        <authorList>
            <person name="Kuroda M."/>
            <person name="Yamashita A."/>
            <person name="Hirakawa H."/>
            <person name="Kumano M."/>
            <person name="Morikawa K."/>
            <person name="Higashide M."/>
            <person name="Maruyama A."/>
            <person name="Inose Y."/>
            <person name="Matoba K."/>
            <person name="Toh H."/>
            <person name="Kuhara S."/>
            <person name="Hattori M."/>
            <person name="Ohta T."/>
        </authorList>
    </citation>
    <scope>NUCLEOTIDE SEQUENCE [LARGE SCALE GENOMIC DNA]</scope>
    <source>
        <strain>ATCC 15305 / DSM 20229 / NCIMB 8711 / NCTC 7292 / S-41</strain>
    </source>
</reference>
<organism>
    <name type="scientific">Staphylococcus saprophyticus subsp. saprophyticus (strain ATCC 15305 / DSM 20229 / NCIMB 8711 / NCTC 7292 / S-41)</name>
    <dbReference type="NCBI Taxonomy" id="342451"/>
    <lineage>
        <taxon>Bacteria</taxon>
        <taxon>Bacillati</taxon>
        <taxon>Bacillota</taxon>
        <taxon>Bacilli</taxon>
        <taxon>Bacillales</taxon>
        <taxon>Staphylococcaceae</taxon>
        <taxon>Staphylococcus</taxon>
    </lineage>
</organism>
<feature type="chain" id="PRO_0000287376" description="Type II NADH:quinone oxidoreductase">
    <location>
        <begin position="1"/>
        <end position="402"/>
    </location>
</feature>
<feature type="active site" evidence="1">
    <location>
        <position position="172"/>
    </location>
</feature>
<feature type="binding site" evidence="1">
    <location>
        <begin position="12"/>
        <end position="16"/>
    </location>
    <ligand>
        <name>FAD</name>
        <dbReference type="ChEBI" id="CHEBI:57692"/>
    </ligand>
</feature>
<feature type="binding site" evidence="1">
    <location>
        <begin position="39"/>
        <end position="40"/>
    </location>
    <ligand>
        <name>FAD</name>
        <dbReference type="ChEBI" id="CHEBI:57692"/>
    </ligand>
</feature>
<feature type="binding site" evidence="1">
    <location>
        <position position="83"/>
    </location>
    <ligand>
        <name>FAD</name>
        <dbReference type="ChEBI" id="CHEBI:57692"/>
    </ligand>
</feature>
<feature type="binding site" evidence="1">
    <location>
        <position position="302"/>
    </location>
    <ligand>
        <name>FAD</name>
        <dbReference type="ChEBI" id="CHEBI:57692"/>
    </ligand>
</feature>
<feature type="binding site" evidence="1">
    <location>
        <begin position="319"/>
        <end position="320"/>
    </location>
    <ligand>
        <name>FAD</name>
        <dbReference type="ChEBI" id="CHEBI:57692"/>
    </ligand>
</feature>
<feature type="binding site" evidence="1">
    <location>
        <position position="379"/>
    </location>
    <ligand>
        <name>FAD</name>
        <dbReference type="ChEBI" id="CHEBI:57692"/>
    </ligand>
</feature>
<protein>
    <recommendedName>
        <fullName evidence="1">Type II NADH:quinone oxidoreductase</fullName>
        <ecNumber evidence="1">1.6.5.9</ecNumber>
    </recommendedName>
    <alternativeName>
        <fullName evidence="1">NDH-2</fullName>
    </alternativeName>
</protein>
<comment type="function">
    <text evidence="1">Alternative, nonproton pumping NADH:quinone oxidoreductase that delivers electrons to the respiratory chain by oxidation of NADH and reduction of quinones, and contributes to the regeneration of NAD(+).</text>
</comment>
<comment type="catalytic activity">
    <reaction evidence="1">
        <text>a quinone + NADH + H(+) = a quinol + NAD(+)</text>
        <dbReference type="Rhea" id="RHEA:46160"/>
        <dbReference type="ChEBI" id="CHEBI:15378"/>
        <dbReference type="ChEBI" id="CHEBI:24646"/>
        <dbReference type="ChEBI" id="CHEBI:57540"/>
        <dbReference type="ChEBI" id="CHEBI:57945"/>
        <dbReference type="ChEBI" id="CHEBI:132124"/>
        <dbReference type="EC" id="1.6.5.9"/>
    </reaction>
</comment>
<comment type="cofactor">
    <cofactor evidence="1">
        <name>FAD</name>
        <dbReference type="ChEBI" id="CHEBI:57692"/>
    </cofactor>
    <text evidence="1">Binds 1 FAD per subunit.</text>
</comment>
<comment type="subcellular location">
    <subcellularLocation>
        <location evidence="1">Cell membrane</location>
    </subcellularLocation>
</comment>
<comment type="similarity">
    <text evidence="2">Belongs to the NADH dehydrogenase family.</text>
</comment>
<evidence type="ECO:0000250" key="1">
    <source>
        <dbReference type="UniProtKB" id="Q2FZV7"/>
    </source>
</evidence>
<evidence type="ECO:0000305" key="2"/>
<keyword id="KW-1003">Cell membrane</keyword>
<keyword id="KW-0274">FAD</keyword>
<keyword id="KW-0285">Flavoprotein</keyword>
<keyword id="KW-0472">Membrane</keyword>
<keyword id="KW-0520">NAD</keyword>
<keyword id="KW-0560">Oxidoreductase</keyword>
<keyword id="KW-1185">Reference proteome</keyword>
<name>NDH_STAS1</name>
<sequence length="402" mass="44227">MAQDRKKVLVLGAGYAGLQTITKLQKQISADEAEVTLINKNDYHYEATWLHEASAGTISYEDLLYPVESVVNKDKVNFVKAEVTKIDRNAKKVETDAGIFDFDILVVSLGFESETFGIKGMKDYAFQIENVLTARKLSRHIEDKFANYASSKQKDDKDLAIIVGGAGFTGVEFLGELTDRIPELCNKYGVEQSKVKITCVEAAPKMLPMFSDELVNHAVNYLENKGVEFKIGTPIVAANEKGFVVKVNDEEQQLEANTVVWAAGVRGSKLMEESFEGVKRGRIVTKQDLTIEGYDDIFVIGDCSAFIPAGEERPLPTTAQIATQQGEHTAKNVKNILEGQPTNEFEYVDRGTVCSLGAHDGVGVVYGRDIQGKKAAFMKKVIDTRAVFKLGGIGLAFKKGKF</sequence>